<accession>Q5XA63</accession>
<comment type="function">
    <text evidence="1">Binds as a heterodimer with protein bS6 to the central domain of the 16S rRNA, where it helps stabilize the platform of the 30S subunit.</text>
</comment>
<comment type="subunit">
    <text evidence="1">Part of the 30S ribosomal subunit. Forms a tight heterodimer with protein bS6.</text>
</comment>
<comment type="similarity">
    <text evidence="1">Belongs to the bacterial ribosomal protein bS18 family.</text>
</comment>
<feature type="chain" id="PRO_0000111243" description="Small ribosomal subunit protein bS18">
    <location>
        <begin position="1"/>
        <end position="79"/>
    </location>
</feature>
<protein>
    <recommendedName>
        <fullName evidence="1">Small ribosomal subunit protein bS18</fullName>
    </recommendedName>
    <alternativeName>
        <fullName evidence="2">30S ribosomal protein S18</fullName>
    </alternativeName>
</protein>
<reference key="1">
    <citation type="journal article" date="2004" name="J. Infect. Dis.">
        <title>Progress toward characterization of the group A Streptococcus metagenome: complete genome sequence of a macrolide-resistant serotype M6 strain.</title>
        <authorList>
            <person name="Banks D.J."/>
            <person name="Porcella S.F."/>
            <person name="Barbian K.D."/>
            <person name="Beres S.B."/>
            <person name="Philips L.E."/>
            <person name="Voyich J.M."/>
            <person name="DeLeo F.R."/>
            <person name="Martin J.M."/>
            <person name="Somerville G.A."/>
            <person name="Musser J.M."/>
        </authorList>
    </citation>
    <scope>NUCLEOTIDE SEQUENCE [LARGE SCALE GENOMIC DNA]</scope>
    <source>
        <strain>ATCC BAA-946 / MGAS10394</strain>
    </source>
</reference>
<gene>
    <name evidence="1" type="primary">rpsR</name>
    <name type="ordered locus">M6_Spy1565</name>
</gene>
<sequence length="79" mass="9204">MAQQRRGGFKRRKKVDFIAANKIEYVDYKDTELLSRFVSERGKILPRRVTGTSAKNQRKVTTAIKRARVMALMPYVNED</sequence>
<dbReference type="EMBL" id="CP000003">
    <property type="protein sequence ID" value="AAT87700.1"/>
    <property type="molecule type" value="Genomic_DNA"/>
</dbReference>
<dbReference type="RefSeq" id="WP_002983142.1">
    <property type="nucleotide sequence ID" value="NC_006086.1"/>
</dbReference>
<dbReference type="SMR" id="Q5XA63"/>
<dbReference type="GeneID" id="93826879"/>
<dbReference type="KEGG" id="spa:M6_Spy1565"/>
<dbReference type="HOGENOM" id="CLU_148710_2_2_9"/>
<dbReference type="Proteomes" id="UP000001167">
    <property type="component" value="Chromosome"/>
</dbReference>
<dbReference type="GO" id="GO:0022627">
    <property type="term" value="C:cytosolic small ribosomal subunit"/>
    <property type="evidence" value="ECO:0007669"/>
    <property type="project" value="TreeGrafter"/>
</dbReference>
<dbReference type="GO" id="GO:0070181">
    <property type="term" value="F:small ribosomal subunit rRNA binding"/>
    <property type="evidence" value="ECO:0007669"/>
    <property type="project" value="TreeGrafter"/>
</dbReference>
<dbReference type="GO" id="GO:0003735">
    <property type="term" value="F:structural constituent of ribosome"/>
    <property type="evidence" value="ECO:0007669"/>
    <property type="project" value="InterPro"/>
</dbReference>
<dbReference type="GO" id="GO:0006412">
    <property type="term" value="P:translation"/>
    <property type="evidence" value="ECO:0007669"/>
    <property type="project" value="UniProtKB-UniRule"/>
</dbReference>
<dbReference type="FunFam" id="4.10.640.10:FF:000003">
    <property type="entry name" value="30S ribosomal protein S18"/>
    <property type="match status" value="1"/>
</dbReference>
<dbReference type="Gene3D" id="4.10.640.10">
    <property type="entry name" value="Ribosomal protein S18"/>
    <property type="match status" value="1"/>
</dbReference>
<dbReference type="HAMAP" id="MF_00270">
    <property type="entry name" value="Ribosomal_bS18"/>
    <property type="match status" value="1"/>
</dbReference>
<dbReference type="InterPro" id="IPR001648">
    <property type="entry name" value="Ribosomal_bS18"/>
</dbReference>
<dbReference type="InterPro" id="IPR018275">
    <property type="entry name" value="Ribosomal_bS18_CS"/>
</dbReference>
<dbReference type="InterPro" id="IPR036870">
    <property type="entry name" value="Ribosomal_bS18_sf"/>
</dbReference>
<dbReference type="NCBIfam" id="TIGR00165">
    <property type="entry name" value="S18"/>
    <property type="match status" value="1"/>
</dbReference>
<dbReference type="PANTHER" id="PTHR13479">
    <property type="entry name" value="30S RIBOSOMAL PROTEIN S18"/>
    <property type="match status" value="1"/>
</dbReference>
<dbReference type="PANTHER" id="PTHR13479:SF40">
    <property type="entry name" value="SMALL RIBOSOMAL SUBUNIT PROTEIN BS18M"/>
    <property type="match status" value="1"/>
</dbReference>
<dbReference type="Pfam" id="PF01084">
    <property type="entry name" value="Ribosomal_S18"/>
    <property type="match status" value="1"/>
</dbReference>
<dbReference type="PRINTS" id="PR00974">
    <property type="entry name" value="RIBOSOMALS18"/>
</dbReference>
<dbReference type="SUPFAM" id="SSF46911">
    <property type="entry name" value="Ribosomal protein S18"/>
    <property type="match status" value="1"/>
</dbReference>
<dbReference type="PROSITE" id="PS00057">
    <property type="entry name" value="RIBOSOMAL_S18"/>
    <property type="match status" value="1"/>
</dbReference>
<organism>
    <name type="scientific">Streptococcus pyogenes serotype M6 (strain ATCC BAA-946 / MGAS10394)</name>
    <dbReference type="NCBI Taxonomy" id="286636"/>
    <lineage>
        <taxon>Bacteria</taxon>
        <taxon>Bacillati</taxon>
        <taxon>Bacillota</taxon>
        <taxon>Bacilli</taxon>
        <taxon>Lactobacillales</taxon>
        <taxon>Streptococcaceae</taxon>
        <taxon>Streptococcus</taxon>
    </lineage>
</organism>
<proteinExistence type="inferred from homology"/>
<name>RS18_STRP6</name>
<keyword id="KW-0687">Ribonucleoprotein</keyword>
<keyword id="KW-0689">Ribosomal protein</keyword>
<keyword id="KW-0694">RNA-binding</keyword>
<keyword id="KW-0699">rRNA-binding</keyword>
<evidence type="ECO:0000255" key="1">
    <source>
        <dbReference type="HAMAP-Rule" id="MF_00270"/>
    </source>
</evidence>
<evidence type="ECO:0000305" key="2"/>